<dbReference type="EMBL" id="CP000569">
    <property type="protein sequence ID" value="ABN74731.1"/>
    <property type="molecule type" value="Genomic_DNA"/>
</dbReference>
<dbReference type="RefSeq" id="WP_005599063.1">
    <property type="nucleotide sequence ID" value="NC_009053.1"/>
</dbReference>
<dbReference type="SMR" id="A3N2U5"/>
<dbReference type="STRING" id="416269.APL_1647"/>
<dbReference type="EnsemblBacteria" id="ABN74731">
    <property type="protein sequence ID" value="ABN74731"/>
    <property type="gene ID" value="APL_1647"/>
</dbReference>
<dbReference type="GeneID" id="48599937"/>
<dbReference type="KEGG" id="apl:APL_1647"/>
<dbReference type="eggNOG" id="COG0224">
    <property type="taxonomic scope" value="Bacteria"/>
</dbReference>
<dbReference type="HOGENOM" id="CLU_050669_0_1_6"/>
<dbReference type="Proteomes" id="UP000001432">
    <property type="component" value="Chromosome"/>
</dbReference>
<dbReference type="GO" id="GO:0005886">
    <property type="term" value="C:plasma membrane"/>
    <property type="evidence" value="ECO:0007669"/>
    <property type="project" value="UniProtKB-SubCell"/>
</dbReference>
<dbReference type="GO" id="GO:0045259">
    <property type="term" value="C:proton-transporting ATP synthase complex"/>
    <property type="evidence" value="ECO:0007669"/>
    <property type="project" value="UniProtKB-KW"/>
</dbReference>
<dbReference type="GO" id="GO:0005524">
    <property type="term" value="F:ATP binding"/>
    <property type="evidence" value="ECO:0007669"/>
    <property type="project" value="UniProtKB-UniRule"/>
</dbReference>
<dbReference type="GO" id="GO:0046933">
    <property type="term" value="F:proton-transporting ATP synthase activity, rotational mechanism"/>
    <property type="evidence" value="ECO:0007669"/>
    <property type="project" value="UniProtKB-UniRule"/>
</dbReference>
<dbReference type="GO" id="GO:0042777">
    <property type="term" value="P:proton motive force-driven plasma membrane ATP synthesis"/>
    <property type="evidence" value="ECO:0007669"/>
    <property type="project" value="UniProtKB-UniRule"/>
</dbReference>
<dbReference type="CDD" id="cd12151">
    <property type="entry name" value="F1-ATPase_gamma"/>
    <property type="match status" value="1"/>
</dbReference>
<dbReference type="FunFam" id="1.10.287.80:FF:000005">
    <property type="entry name" value="ATP synthase gamma chain"/>
    <property type="match status" value="2"/>
</dbReference>
<dbReference type="FunFam" id="3.40.1380.10:FF:000006">
    <property type="entry name" value="ATP synthase gamma chain"/>
    <property type="match status" value="1"/>
</dbReference>
<dbReference type="Gene3D" id="3.40.1380.10">
    <property type="match status" value="1"/>
</dbReference>
<dbReference type="Gene3D" id="1.10.287.80">
    <property type="entry name" value="ATP synthase, gamma subunit, helix hairpin domain"/>
    <property type="match status" value="2"/>
</dbReference>
<dbReference type="HAMAP" id="MF_00815">
    <property type="entry name" value="ATP_synth_gamma_bact"/>
    <property type="match status" value="1"/>
</dbReference>
<dbReference type="InterPro" id="IPR035968">
    <property type="entry name" value="ATP_synth_F1_ATPase_gsu"/>
</dbReference>
<dbReference type="InterPro" id="IPR000131">
    <property type="entry name" value="ATP_synth_F1_gsu"/>
</dbReference>
<dbReference type="InterPro" id="IPR023632">
    <property type="entry name" value="ATP_synth_F1_gsu_CS"/>
</dbReference>
<dbReference type="NCBIfam" id="TIGR01146">
    <property type="entry name" value="ATPsyn_F1gamma"/>
    <property type="match status" value="1"/>
</dbReference>
<dbReference type="NCBIfam" id="NF004144">
    <property type="entry name" value="PRK05621.1-1"/>
    <property type="match status" value="1"/>
</dbReference>
<dbReference type="PANTHER" id="PTHR11693">
    <property type="entry name" value="ATP SYNTHASE GAMMA CHAIN"/>
    <property type="match status" value="1"/>
</dbReference>
<dbReference type="PANTHER" id="PTHR11693:SF22">
    <property type="entry name" value="ATP SYNTHASE SUBUNIT GAMMA, MITOCHONDRIAL"/>
    <property type="match status" value="1"/>
</dbReference>
<dbReference type="Pfam" id="PF00231">
    <property type="entry name" value="ATP-synt"/>
    <property type="match status" value="1"/>
</dbReference>
<dbReference type="PRINTS" id="PR00126">
    <property type="entry name" value="ATPASEGAMMA"/>
</dbReference>
<dbReference type="SUPFAM" id="SSF52943">
    <property type="entry name" value="ATP synthase (F1-ATPase), gamma subunit"/>
    <property type="match status" value="1"/>
</dbReference>
<dbReference type="PROSITE" id="PS00153">
    <property type="entry name" value="ATPASE_GAMMA"/>
    <property type="match status" value="1"/>
</dbReference>
<feature type="chain" id="PRO_1000053146" description="ATP synthase gamma chain">
    <location>
        <begin position="1"/>
        <end position="288"/>
    </location>
</feature>
<proteinExistence type="inferred from homology"/>
<organism>
    <name type="scientific">Actinobacillus pleuropneumoniae serotype 5b (strain L20)</name>
    <dbReference type="NCBI Taxonomy" id="416269"/>
    <lineage>
        <taxon>Bacteria</taxon>
        <taxon>Pseudomonadati</taxon>
        <taxon>Pseudomonadota</taxon>
        <taxon>Gammaproteobacteria</taxon>
        <taxon>Pasteurellales</taxon>
        <taxon>Pasteurellaceae</taxon>
        <taxon>Actinobacillus</taxon>
    </lineage>
</organism>
<gene>
    <name evidence="1" type="primary">atpG</name>
    <name type="ordered locus">APL_1647</name>
</gene>
<name>ATPG_ACTP2</name>
<keyword id="KW-0066">ATP synthesis</keyword>
<keyword id="KW-0997">Cell inner membrane</keyword>
<keyword id="KW-1003">Cell membrane</keyword>
<keyword id="KW-0139">CF(1)</keyword>
<keyword id="KW-0375">Hydrogen ion transport</keyword>
<keyword id="KW-0406">Ion transport</keyword>
<keyword id="KW-0472">Membrane</keyword>
<keyword id="KW-1185">Reference proteome</keyword>
<keyword id="KW-0813">Transport</keyword>
<reference key="1">
    <citation type="journal article" date="2008" name="J. Bacteriol.">
        <title>The complete genome sequence of Actinobacillus pleuropneumoniae L20 (serotype 5b).</title>
        <authorList>
            <person name="Foote S.J."/>
            <person name="Bosse J.T."/>
            <person name="Bouevitch A.B."/>
            <person name="Langford P.R."/>
            <person name="Young N.M."/>
            <person name="Nash J.H.E."/>
        </authorList>
    </citation>
    <scope>NUCLEOTIDE SEQUENCE [LARGE SCALE GENOMIC DNA]</scope>
    <source>
        <strain>L20</strain>
    </source>
</reference>
<accession>A3N2U5</accession>
<sequence length="288" mass="31885">MAGAKEIRTKIASVKNTQKITKAMEMVATSKMRKTQERMAASRPYSETIRKVISHIAKGSIGYKHPFLTERDIKKVGYLVVSTDRGLCGGLNINLFKATLNEFKTWKDKDVSVELGLVGSKGVSFYQNLGLNVRSQVTGLGDNPEMERIVGAVNEMINAFRNGEVDAVYVAYNRFENTMSQKPVIAQLLPLPKLDDDELDTKGSWDYIYEPNPQVLLDSLLVRYLETQVYQAVVDNLASEQAARMVAMKAATDNAGTLIDELQLVYNKARQASITNELNEIVAGAAAI</sequence>
<comment type="function">
    <text evidence="1">Produces ATP from ADP in the presence of a proton gradient across the membrane. The gamma chain is believed to be important in regulating ATPase activity and the flow of protons through the CF(0) complex.</text>
</comment>
<comment type="subunit">
    <text evidence="1">F-type ATPases have 2 components, CF(1) - the catalytic core - and CF(0) - the membrane proton channel. CF(1) has five subunits: alpha(3), beta(3), gamma(1), delta(1), epsilon(1). CF(0) has three main subunits: a, b and c.</text>
</comment>
<comment type="subcellular location">
    <subcellularLocation>
        <location evidence="1">Cell inner membrane</location>
        <topology evidence="1">Peripheral membrane protein</topology>
    </subcellularLocation>
</comment>
<comment type="similarity">
    <text evidence="1">Belongs to the ATPase gamma chain family.</text>
</comment>
<evidence type="ECO:0000255" key="1">
    <source>
        <dbReference type="HAMAP-Rule" id="MF_00815"/>
    </source>
</evidence>
<protein>
    <recommendedName>
        <fullName evidence="1">ATP synthase gamma chain</fullName>
    </recommendedName>
    <alternativeName>
        <fullName evidence="1">ATP synthase F1 sector gamma subunit</fullName>
    </alternativeName>
    <alternativeName>
        <fullName evidence="1">F-ATPase gamma subunit</fullName>
    </alternativeName>
</protein>